<name>IF2_PARP8</name>
<sequence>MASNNVAQFAAELKMPAGVLLEQLQAAGVQKASEDDALSETDKARLLDHLRRSHGSNDADKRKITLTKRHTSEIKQSDATGKARTIQVEVRKKRTFVRRDEAAEQAAEATGNGQEAAEDLELQRREEEARHEAELLEKQAQELKARQEQLAREEAERQAREQAAEAERRRAEEEAAKKRAAAVAEAAAAAREQAEQERASQDEERAAAERAAQREAAKKAEDAAREQAEKARLEQEEIAKRRAKAEAEARAIREMMNTPRKAQVKAPEPPPKPAEAPKPAEAKGTLHKPARPAGETSARPAAKKPAPAAAAQPAATTQPAGPGGDKKKAGGKGGWQDDAAKRRGIKTRGDTSGGVDRGWRGGPKGRGKHQESTTFQAPTEPIVREVHVPETITVADLAHKMSVKASEVIKVMMKLGQMVTINQMLDQETAMIVVEELGHHAVAAKLDDPEAMLVEGEASDAPQLPRPPVVTVMGHVDHGKTSLLDYIRRAKVAAGEAGGITQHIGAYHVETPRGVITFLDTPGHEAFTAMRARGAKATDIVILVVAADDGVMPQTKEAISHAKAGGVPLVVAINKIDKPEANPERVKQELVAEGVVPEEYGGDSPFVPVSAKTGAGIDDLLENVLLQAEVLELKAPVEAPAKGLVIEAKLDKGKGPVATILVQSGTLNRGDVVLAGSAYGRVRAMLDETGKPTKAAGPSIPVEIQGLSEVPAAGEEVIVMPDDRKAREVALFRQGKFRDVKLAKQQAAKLENMLEQMGEGEVQYLPLIVKADVQGSQEALVQSLLKLSNDEVRVQIVHSAVGGISESDVNLATASKAVIIGFNTRADAQARKLAESNGIDIRYYNIIYDAVDEVKAAMSGMLAPEKREVVTGMVEVRQVFKVPKVGAVAGCMVTDGVVKRTSSVRVLRNNVVIHTGELDSLKRFKDDVKEVRQGFECGMSVKNFNDIMEGDQFEVFEVTEVARTL</sequence>
<gene>
    <name evidence="2" type="primary">infB</name>
    <name type="ordered locus">Bphy_1729</name>
</gene>
<evidence type="ECO:0000250" key="1"/>
<evidence type="ECO:0000255" key="2">
    <source>
        <dbReference type="HAMAP-Rule" id="MF_00100"/>
    </source>
</evidence>
<evidence type="ECO:0000256" key="3">
    <source>
        <dbReference type="SAM" id="MobiDB-lite"/>
    </source>
</evidence>
<reference key="1">
    <citation type="journal article" date="2014" name="Stand. Genomic Sci.">
        <title>Complete genome sequence of Burkholderia phymatum STM815(T), a broad host range and efficient nitrogen-fixing symbiont of Mimosa species.</title>
        <authorList>
            <person name="Moulin L."/>
            <person name="Klonowska A."/>
            <person name="Caroline B."/>
            <person name="Booth K."/>
            <person name="Vriezen J.A."/>
            <person name="Melkonian R."/>
            <person name="James E.K."/>
            <person name="Young J.P."/>
            <person name="Bena G."/>
            <person name="Hauser L."/>
            <person name="Land M."/>
            <person name="Kyrpides N."/>
            <person name="Bruce D."/>
            <person name="Chain P."/>
            <person name="Copeland A."/>
            <person name="Pitluck S."/>
            <person name="Woyke T."/>
            <person name="Lizotte-Waniewski M."/>
            <person name="Bristow J."/>
            <person name="Riley M."/>
        </authorList>
    </citation>
    <scope>NUCLEOTIDE SEQUENCE [LARGE SCALE GENOMIC DNA]</scope>
    <source>
        <strain>DSM 17167 / CIP 108236 / LMG 21445 / STM815</strain>
    </source>
</reference>
<organism>
    <name type="scientific">Paraburkholderia phymatum (strain DSM 17167 / CIP 108236 / LMG 21445 / STM815)</name>
    <name type="common">Burkholderia phymatum</name>
    <dbReference type="NCBI Taxonomy" id="391038"/>
    <lineage>
        <taxon>Bacteria</taxon>
        <taxon>Pseudomonadati</taxon>
        <taxon>Pseudomonadota</taxon>
        <taxon>Betaproteobacteria</taxon>
        <taxon>Burkholderiales</taxon>
        <taxon>Burkholderiaceae</taxon>
        <taxon>Paraburkholderia</taxon>
    </lineage>
</organism>
<accession>B2JKT4</accession>
<protein>
    <recommendedName>
        <fullName evidence="2">Translation initiation factor IF-2</fullName>
    </recommendedName>
</protein>
<feature type="chain" id="PRO_1000093765" description="Translation initiation factor IF-2">
    <location>
        <begin position="1"/>
        <end position="965"/>
    </location>
</feature>
<feature type="domain" description="tr-type G">
    <location>
        <begin position="465"/>
        <end position="634"/>
    </location>
</feature>
<feature type="region of interest" description="Disordered" evidence="3">
    <location>
        <begin position="94"/>
        <end position="375"/>
    </location>
</feature>
<feature type="region of interest" description="G1" evidence="1">
    <location>
        <begin position="474"/>
        <end position="481"/>
    </location>
</feature>
<feature type="region of interest" description="G2" evidence="1">
    <location>
        <begin position="499"/>
        <end position="503"/>
    </location>
</feature>
<feature type="region of interest" description="G3" evidence="1">
    <location>
        <begin position="520"/>
        <end position="523"/>
    </location>
</feature>
<feature type="region of interest" description="G4" evidence="1">
    <location>
        <begin position="574"/>
        <end position="577"/>
    </location>
</feature>
<feature type="region of interest" description="G5" evidence="1">
    <location>
        <begin position="610"/>
        <end position="612"/>
    </location>
</feature>
<feature type="compositionally biased region" description="Low complexity" evidence="3">
    <location>
        <begin position="104"/>
        <end position="115"/>
    </location>
</feature>
<feature type="compositionally biased region" description="Basic and acidic residues" evidence="3">
    <location>
        <begin position="121"/>
        <end position="177"/>
    </location>
</feature>
<feature type="compositionally biased region" description="Low complexity" evidence="3">
    <location>
        <begin position="181"/>
        <end position="191"/>
    </location>
</feature>
<feature type="compositionally biased region" description="Basic and acidic residues" evidence="3">
    <location>
        <begin position="192"/>
        <end position="253"/>
    </location>
</feature>
<feature type="compositionally biased region" description="Pro residues" evidence="3">
    <location>
        <begin position="267"/>
        <end position="276"/>
    </location>
</feature>
<feature type="compositionally biased region" description="Low complexity" evidence="3">
    <location>
        <begin position="303"/>
        <end position="320"/>
    </location>
</feature>
<feature type="compositionally biased region" description="Gly residues" evidence="3">
    <location>
        <begin position="351"/>
        <end position="364"/>
    </location>
</feature>
<feature type="binding site" evidence="2">
    <location>
        <begin position="474"/>
        <end position="481"/>
    </location>
    <ligand>
        <name>GTP</name>
        <dbReference type="ChEBI" id="CHEBI:37565"/>
    </ligand>
</feature>
<feature type="binding site" evidence="2">
    <location>
        <begin position="520"/>
        <end position="524"/>
    </location>
    <ligand>
        <name>GTP</name>
        <dbReference type="ChEBI" id="CHEBI:37565"/>
    </ligand>
</feature>
<feature type="binding site" evidence="2">
    <location>
        <begin position="574"/>
        <end position="577"/>
    </location>
    <ligand>
        <name>GTP</name>
        <dbReference type="ChEBI" id="CHEBI:37565"/>
    </ligand>
</feature>
<keyword id="KW-0963">Cytoplasm</keyword>
<keyword id="KW-0342">GTP-binding</keyword>
<keyword id="KW-0396">Initiation factor</keyword>
<keyword id="KW-0547">Nucleotide-binding</keyword>
<keyword id="KW-0648">Protein biosynthesis</keyword>
<keyword id="KW-1185">Reference proteome</keyword>
<comment type="function">
    <text evidence="2">One of the essential components for the initiation of protein synthesis. Protects formylmethionyl-tRNA from spontaneous hydrolysis and promotes its binding to the 30S ribosomal subunits. Also involved in the hydrolysis of GTP during the formation of the 70S ribosomal complex.</text>
</comment>
<comment type="subcellular location">
    <subcellularLocation>
        <location evidence="2">Cytoplasm</location>
    </subcellularLocation>
</comment>
<comment type="similarity">
    <text evidence="2">Belongs to the TRAFAC class translation factor GTPase superfamily. Classic translation factor GTPase family. IF-2 subfamily.</text>
</comment>
<proteinExistence type="inferred from homology"/>
<dbReference type="EMBL" id="CP001043">
    <property type="protein sequence ID" value="ACC70911.1"/>
    <property type="molecule type" value="Genomic_DNA"/>
</dbReference>
<dbReference type="RefSeq" id="WP_012401121.1">
    <property type="nucleotide sequence ID" value="NC_010622.1"/>
</dbReference>
<dbReference type="SMR" id="B2JKT4"/>
<dbReference type="STRING" id="391038.Bphy_1729"/>
<dbReference type="KEGG" id="bph:Bphy_1729"/>
<dbReference type="eggNOG" id="COG0532">
    <property type="taxonomic scope" value="Bacteria"/>
</dbReference>
<dbReference type="HOGENOM" id="CLU_006301_6_0_4"/>
<dbReference type="OrthoDB" id="9811804at2"/>
<dbReference type="Proteomes" id="UP000001192">
    <property type="component" value="Chromosome 1"/>
</dbReference>
<dbReference type="GO" id="GO:0005829">
    <property type="term" value="C:cytosol"/>
    <property type="evidence" value="ECO:0007669"/>
    <property type="project" value="TreeGrafter"/>
</dbReference>
<dbReference type="GO" id="GO:0005525">
    <property type="term" value="F:GTP binding"/>
    <property type="evidence" value="ECO:0007669"/>
    <property type="project" value="UniProtKB-KW"/>
</dbReference>
<dbReference type="GO" id="GO:0003924">
    <property type="term" value="F:GTPase activity"/>
    <property type="evidence" value="ECO:0007669"/>
    <property type="project" value="UniProtKB-UniRule"/>
</dbReference>
<dbReference type="GO" id="GO:0097216">
    <property type="term" value="F:guanosine tetraphosphate binding"/>
    <property type="evidence" value="ECO:0007669"/>
    <property type="project" value="UniProtKB-ARBA"/>
</dbReference>
<dbReference type="GO" id="GO:0003743">
    <property type="term" value="F:translation initiation factor activity"/>
    <property type="evidence" value="ECO:0007669"/>
    <property type="project" value="UniProtKB-UniRule"/>
</dbReference>
<dbReference type="CDD" id="cd01887">
    <property type="entry name" value="IF2_eIF5B"/>
    <property type="match status" value="1"/>
</dbReference>
<dbReference type="CDD" id="cd03702">
    <property type="entry name" value="IF2_mtIF2_II"/>
    <property type="match status" value="1"/>
</dbReference>
<dbReference type="CDD" id="cd03692">
    <property type="entry name" value="mtIF2_IVc"/>
    <property type="match status" value="1"/>
</dbReference>
<dbReference type="FunFam" id="2.40.30.10:FF:000007">
    <property type="entry name" value="Translation initiation factor IF-2"/>
    <property type="match status" value="1"/>
</dbReference>
<dbReference type="FunFam" id="2.40.30.10:FF:000008">
    <property type="entry name" value="Translation initiation factor IF-2"/>
    <property type="match status" value="1"/>
</dbReference>
<dbReference type="FunFam" id="3.40.50.10050:FF:000001">
    <property type="entry name" value="Translation initiation factor IF-2"/>
    <property type="match status" value="1"/>
</dbReference>
<dbReference type="FunFam" id="3.40.50.300:FF:000019">
    <property type="entry name" value="Translation initiation factor IF-2"/>
    <property type="match status" value="1"/>
</dbReference>
<dbReference type="Gene3D" id="3.40.50.300">
    <property type="entry name" value="P-loop containing nucleotide triphosphate hydrolases"/>
    <property type="match status" value="1"/>
</dbReference>
<dbReference type="Gene3D" id="3.30.56.50">
    <property type="entry name" value="Putative DNA-binding domain, N-terminal subdomain of bacterial translation initiation factor IF2"/>
    <property type="match status" value="1"/>
</dbReference>
<dbReference type="Gene3D" id="2.40.30.10">
    <property type="entry name" value="Translation factors"/>
    <property type="match status" value="2"/>
</dbReference>
<dbReference type="Gene3D" id="3.40.50.10050">
    <property type="entry name" value="Translation initiation factor IF- 2, domain 3"/>
    <property type="match status" value="1"/>
</dbReference>
<dbReference type="HAMAP" id="MF_00100_B">
    <property type="entry name" value="IF_2_B"/>
    <property type="match status" value="1"/>
</dbReference>
<dbReference type="InterPro" id="IPR009061">
    <property type="entry name" value="DNA-bd_dom_put_sf"/>
</dbReference>
<dbReference type="InterPro" id="IPR053905">
    <property type="entry name" value="EF-G-like_DII"/>
</dbReference>
<dbReference type="InterPro" id="IPR004161">
    <property type="entry name" value="EFTu-like_2"/>
</dbReference>
<dbReference type="InterPro" id="IPR013575">
    <property type="entry name" value="IF2_assoc_dom_bac"/>
</dbReference>
<dbReference type="InterPro" id="IPR044145">
    <property type="entry name" value="IF2_II"/>
</dbReference>
<dbReference type="InterPro" id="IPR006847">
    <property type="entry name" value="IF2_N"/>
</dbReference>
<dbReference type="InterPro" id="IPR027417">
    <property type="entry name" value="P-loop_NTPase"/>
</dbReference>
<dbReference type="InterPro" id="IPR005225">
    <property type="entry name" value="Small_GTP-bd"/>
</dbReference>
<dbReference type="InterPro" id="IPR000795">
    <property type="entry name" value="T_Tr_GTP-bd_dom"/>
</dbReference>
<dbReference type="InterPro" id="IPR000178">
    <property type="entry name" value="TF_IF2_bacterial-like"/>
</dbReference>
<dbReference type="InterPro" id="IPR015760">
    <property type="entry name" value="TIF_IF2"/>
</dbReference>
<dbReference type="InterPro" id="IPR023115">
    <property type="entry name" value="TIF_IF2_dom3"/>
</dbReference>
<dbReference type="InterPro" id="IPR036925">
    <property type="entry name" value="TIF_IF2_dom3_sf"/>
</dbReference>
<dbReference type="InterPro" id="IPR009000">
    <property type="entry name" value="Transl_B-barrel_sf"/>
</dbReference>
<dbReference type="NCBIfam" id="TIGR00487">
    <property type="entry name" value="IF-2"/>
    <property type="match status" value="1"/>
</dbReference>
<dbReference type="NCBIfam" id="TIGR00231">
    <property type="entry name" value="small_GTP"/>
    <property type="match status" value="1"/>
</dbReference>
<dbReference type="PANTHER" id="PTHR43381:SF5">
    <property type="entry name" value="TR-TYPE G DOMAIN-CONTAINING PROTEIN"/>
    <property type="match status" value="1"/>
</dbReference>
<dbReference type="PANTHER" id="PTHR43381">
    <property type="entry name" value="TRANSLATION INITIATION FACTOR IF-2-RELATED"/>
    <property type="match status" value="1"/>
</dbReference>
<dbReference type="Pfam" id="PF22042">
    <property type="entry name" value="EF-G_D2"/>
    <property type="match status" value="1"/>
</dbReference>
<dbReference type="Pfam" id="PF00009">
    <property type="entry name" value="GTP_EFTU"/>
    <property type="match status" value="1"/>
</dbReference>
<dbReference type="Pfam" id="PF03144">
    <property type="entry name" value="GTP_EFTU_D2"/>
    <property type="match status" value="1"/>
</dbReference>
<dbReference type="Pfam" id="PF11987">
    <property type="entry name" value="IF-2"/>
    <property type="match status" value="1"/>
</dbReference>
<dbReference type="Pfam" id="PF08364">
    <property type="entry name" value="IF2_assoc"/>
    <property type="match status" value="1"/>
</dbReference>
<dbReference type="Pfam" id="PF04760">
    <property type="entry name" value="IF2_N"/>
    <property type="match status" value="2"/>
</dbReference>
<dbReference type="SUPFAM" id="SSF52156">
    <property type="entry name" value="Initiation factor IF2/eIF5b, domain 3"/>
    <property type="match status" value="1"/>
</dbReference>
<dbReference type="SUPFAM" id="SSF52540">
    <property type="entry name" value="P-loop containing nucleoside triphosphate hydrolases"/>
    <property type="match status" value="1"/>
</dbReference>
<dbReference type="SUPFAM" id="SSF46955">
    <property type="entry name" value="Putative DNA-binding domain"/>
    <property type="match status" value="1"/>
</dbReference>
<dbReference type="SUPFAM" id="SSF50447">
    <property type="entry name" value="Translation proteins"/>
    <property type="match status" value="2"/>
</dbReference>
<dbReference type="PROSITE" id="PS51722">
    <property type="entry name" value="G_TR_2"/>
    <property type="match status" value="1"/>
</dbReference>
<dbReference type="PROSITE" id="PS01176">
    <property type="entry name" value="IF2"/>
    <property type="match status" value="1"/>
</dbReference>